<accession>D4AS70</accession>
<gene>
    <name type="ORF">ARB_07085</name>
</gene>
<dbReference type="EC" id="3.1.1.73" evidence="2"/>
<dbReference type="EMBL" id="ABSU01000007">
    <property type="protein sequence ID" value="EFE34134.1"/>
    <property type="molecule type" value="Genomic_DNA"/>
</dbReference>
<dbReference type="RefSeq" id="XP_003014523.1">
    <property type="nucleotide sequence ID" value="XM_003014477.1"/>
</dbReference>
<dbReference type="SMR" id="D4AS70"/>
<dbReference type="ESTHER" id="artbc-fae1">
    <property type="family name" value="Tannase"/>
</dbReference>
<dbReference type="GeneID" id="9520575"/>
<dbReference type="KEGG" id="abe:ARB_07085"/>
<dbReference type="eggNOG" id="ENOG502SH94">
    <property type="taxonomic scope" value="Eukaryota"/>
</dbReference>
<dbReference type="HOGENOM" id="CLU_014819_3_2_1"/>
<dbReference type="OMA" id="KWNGRFQ"/>
<dbReference type="OrthoDB" id="3039123at2759"/>
<dbReference type="Proteomes" id="UP000008866">
    <property type="component" value="Unassembled WGS sequence"/>
</dbReference>
<dbReference type="GO" id="GO:0005576">
    <property type="term" value="C:extracellular region"/>
    <property type="evidence" value="ECO:0007669"/>
    <property type="project" value="UniProtKB-SubCell"/>
</dbReference>
<dbReference type="GO" id="GO:0030600">
    <property type="term" value="F:feruloyl esterase activity"/>
    <property type="evidence" value="ECO:0007669"/>
    <property type="project" value="UniProtKB-EC"/>
</dbReference>
<dbReference type="GO" id="GO:0046872">
    <property type="term" value="F:metal ion binding"/>
    <property type="evidence" value="ECO:0007669"/>
    <property type="project" value="UniProtKB-KW"/>
</dbReference>
<dbReference type="GO" id="GO:0045493">
    <property type="term" value="P:xylan catabolic process"/>
    <property type="evidence" value="ECO:0007669"/>
    <property type="project" value="UniProtKB-KW"/>
</dbReference>
<dbReference type="Gene3D" id="3.40.50.1820">
    <property type="entry name" value="alpha/beta hydrolase"/>
    <property type="match status" value="1"/>
</dbReference>
<dbReference type="InterPro" id="IPR029058">
    <property type="entry name" value="AB_hydrolase_fold"/>
</dbReference>
<dbReference type="InterPro" id="IPR011118">
    <property type="entry name" value="Tannase/feruloyl_esterase"/>
</dbReference>
<dbReference type="PANTHER" id="PTHR33938:SF8">
    <property type="entry name" value="CARBOXYLIC ESTER HYDROLASE"/>
    <property type="match status" value="1"/>
</dbReference>
<dbReference type="PANTHER" id="PTHR33938">
    <property type="entry name" value="FERULOYL ESTERASE B-RELATED"/>
    <property type="match status" value="1"/>
</dbReference>
<dbReference type="Pfam" id="PF07519">
    <property type="entry name" value="Tannase"/>
    <property type="match status" value="1"/>
</dbReference>
<dbReference type="SUPFAM" id="SSF53474">
    <property type="entry name" value="alpha/beta-Hydrolases"/>
    <property type="match status" value="1"/>
</dbReference>
<proteinExistence type="evidence at protein level"/>
<keyword id="KW-0106">Calcium</keyword>
<keyword id="KW-0119">Carbohydrate metabolism</keyword>
<keyword id="KW-1015">Disulfide bond</keyword>
<keyword id="KW-0325">Glycoprotein</keyword>
<keyword id="KW-0378">Hydrolase</keyword>
<keyword id="KW-0479">Metal-binding</keyword>
<keyword id="KW-0624">Polysaccharide degradation</keyword>
<keyword id="KW-1185">Reference proteome</keyword>
<keyword id="KW-0964">Secreted</keyword>
<keyword id="KW-0719">Serine esterase</keyword>
<keyword id="KW-0732">Signal</keyword>
<keyword id="KW-0858">Xylan degradation</keyword>
<sequence length="537" mass="57777">MVTLPLLLSILPLAAVFSSAASLQVRENHDCASIQPPQVPGAEILSVIGVQRRVEVAPFPPSPSKPNTTIDICSVNVTLSHMGVNDKVVVSVWLPLPDKWNGRFQATGGGGWAAGTFDLLMGPAALEGYSTAGTDAGVTVDPGSADKWALKEDGTVNYDLLENFASRSIHDMAIVGKAVTESYYKKPANYSYFYGCSNGGRQGMVEAQKYPDDFDGILAGAPAIYWPQFLTSTEWPQVVMQSEKVFPSQCVFEAFRKAGIAACDKLDGVEDGVVSNLDGCEFNPFALVGKKVKCGEESTTITLAQAWVAKKIYDGPKSTAKHALWDVLPVGASYVGLANSTIENGVPKIAPFVIGSSWIRSFLKKDVNFDLSTITYADMPKLFQQSIDEFDKIAGGSNPDLSALKKSGTKLLSWHGLADELIHPQGSIKYRQAVEHRMGGGSEVDNYYRLFLAPGVTHCGIGVNDGAAPIDTLKVLVRWVEKGEAPETMPATATDASGTTTLFTRNLCRYPLVPRYKGGDKNSADSFECAKDFGSHH</sequence>
<reference key="1">
    <citation type="journal article" date="2011" name="Genome Biol.">
        <title>Comparative and functional genomics provide insights into the pathogenicity of dermatophytic fungi.</title>
        <authorList>
            <person name="Burmester A."/>
            <person name="Shelest E."/>
            <person name="Gloeckner G."/>
            <person name="Heddergott C."/>
            <person name="Schindler S."/>
            <person name="Staib P."/>
            <person name="Heidel A."/>
            <person name="Felder M."/>
            <person name="Petzold A."/>
            <person name="Szafranski K."/>
            <person name="Feuermann M."/>
            <person name="Pedruzzi I."/>
            <person name="Priebe S."/>
            <person name="Groth M."/>
            <person name="Winkler R."/>
            <person name="Li W."/>
            <person name="Kniemeyer O."/>
            <person name="Schroeckh V."/>
            <person name="Hertweck C."/>
            <person name="Hube B."/>
            <person name="White T.C."/>
            <person name="Platzer M."/>
            <person name="Guthke R."/>
            <person name="Heitman J."/>
            <person name="Woestemeyer J."/>
            <person name="Zipfel P.F."/>
            <person name="Monod M."/>
            <person name="Brakhage A.A."/>
        </authorList>
    </citation>
    <scope>NUCLEOTIDE SEQUENCE [LARGE SCALE GENOMIC DNA]</scope>
    <scope>IDENTIFICATION BY MASS SPECTROMETRY</scope>
    <scope>SUBCELLULAR LOCATION</scope>
    <source>
        <strain>ATCC MYA-4681 / CBS 112371</strain>
    </source>
</reference>
<reference key="2">
    <citation type="journal article" date="2011" name="Proteomics">
        <title>Identification of novel secreted proteases during extracellular proteolysis by dermatophytes at acidic pH.</title>
        <authorList>
            <person name="Sriranganadane D."/>
            <person name="Waridel P."/>
            <person name="Salamin K."/>
            <person name="Feuermann M."/>
            <person name="Mignon B."/>
            <person name="Staib P."/>
            <person name="Neuhaus J.M."/>
            <person name="Quadroni M."/>
            <person name="Monod M."/>
        </authorList>
    </citation>
    <scope>IDENTIFICATION BY MASS SPECTROMETRY</scope>
    <scope>SUBCELLULAR LOCATION</scope>
</reference>
<comment type="function">
    <text evidence="2">Hydrolyzes the feruloyl-arabinose ester bond in arabinoxylans as well as the feruloyl-galactose and feruloyl-arabinose ester bonds.</text>
</comment>
<comment type="catalytic activity">
    <reaction evidence="2">
        <text>feruloyl-polysaccharide + H2O = ferulate + polysaccharide.</text>
        <dbReference type="EC" id="3.1.1.73"/>
    </reaction>
</comment>
<comment type="subcellular location">
    <subcellularLocation>
        <location evidence="5 6">Secreted</location>
    </subcellularLocation>
</comment>
<comment type="similarity">
    <text evidence="7">Belongs to the tannase family.</text>
</comment>
<evidence type="ECO:0000250" key="1">
    <source>
        <dbReference type="UniProtKB" id="Q2UP89"/>
    </source>
</evidence>
<evidence type="ECO:0000250" key="2">
    <source>
        <dbReference type="UniProtKB" id="Q8WZI8"/>
    </source>
</evidence>
<evidence type="ECO:0000255" key="3"/>
<evidence type="ECO:0000255" key="4">
    <source>
        <dbReference type="PROSITE-ProRule" id="PRU00498"/>
    </source>
</evidence>
<evidence type="ECO:0000269" key="5">
    <source>
    </source>
</evidence>
<evidence type="ECO:0000269" key="6">
    <source>
    </source>
</evidence>
<evidence type="ECO:0000305" key="7"/>
<protein>
    <recommendedName>
        <fullName evidence="7">Probable feruloyl esterase ARB_07085</fullName>
        <ecNumber evidence="2">3.1.1.73</ecNumber>
    </recommendedName>
</protein>
<organism>
    <name type="scientific">Arthroderma benhamiae (strain ATCC MYA-4681 / CBS 112371)</name>
    <name type="common">Trichophyton mentagrophytes</name>
    <dbReference type="NCBI Taxonomy" id="663331"/>
    <lineage>
        <taxon>Eukaryota</taxon>
        <taxon>Fungi</taxon>
        <taxon>Dikarya</taxon>
        <taxon>Ascomycota</taxon>
        <taxon>Pezizomycotina</taxon>
        <taxon>Eurotiomycetes</taxon>
        <taxon>Eurotiomycetidae</taxon>
        <taxon>Onygenales</taxon>
        <taxon>Arthrodermataceae</taxon>
        <taxon>Trichophyton</taxon>
    </lineage>
</organism>
<feature type="signal peptide" evidence="3">
    <location>
        <begin position="1"/>
        <end position="22"/>
    </location>
</feature>
<feature type="chain" id="PRO_5001370734" description="Probable feruloyl esterase ARB_07085">
    <location>
        <begin position="23"/>
        <end position="537"/>
    </location>
</feature>
<feature type="active site" description="Acyl-ester intermediate" evidence="1">
    <location>
        <position position="197"/>
    </location>
</feature>
<feature type="active site" description="Charge relay system" evidence="1">
    <location>
        <position position="419"/>
    </location>
</feature>
<feature type="active site" description="Charge relay system" evidence="1">
    <location>
        <position position="458"/>
    </location>
</feature>
<feature type="binding site" evidence="1">
    <location>
        <position position="264"/>
    </location>
    <ligand>
        <name>Ca(2+)</name>
        <dbReference type="ChEBI" id="CHEBI:29108"/>
    </ligand>
</feature>
<feature type="binding site" evidence="1">
    <location>
        <position position="267"/>
    </location>
    <ligand>
        <name>Ca(2+)</name>
        <dbReference type="ChEBI" id="CHEBI:29108"/>
    </ligand>
</feature>
<feature type="binding site" evidence="1">
    <location>
        <position position="269"/>
    </location>
    <ligand>
        <name>Ca(2+)</name>
        <dbReference type="ChEBI" id="CHEBI:29108"/>
    </ligand>
</feature>
<feature type="binding site" evidence="1">
    <location>
        <position position="271"/>
    </location>
    <ligand>
        <name>Ca(2+)</name>
        <dbReference type="ChEBI" id="CHEBI:29108"/>
    </ligand>
</feature>
<feature type="binding site" evidence="1">
    <location>
        <position position="273"/>
    </location>
    <ligand>
        <name>Ca(2+)</name>
        <dbReference type="ChEBI" id="CHEBI:29108"/>
    </ligand>
</feature>
<feature type="glycosylation site" description="N-linked (GlcNAc...) asparagine" evidence="4">
    <location>
        <position position="67"/>
    </location>
</feature>
<feature type="glycosylation site" description="N-linked (GlcNAc...) asparagine" evidence="4">
    <location>
        <position position="76"/>
    </location>
</feature>
<feature type="glycosylation site" description="N-linked (GlcNAc...) asparagine" evidence="4">
    <location>
        <position position="189"/>
    </location>
</feature>
<feature type="glycosylation site" description="N-linked (GlcNAc...) asparagine" evidence="4">
    <location>
        <position position="339"/>
    </location>
</feature>
<feature type="disulfide bond" evidence="1">
    <location>
        <begin position="196"/>
        <end position="459"/>
    </location>
</feature>
<feature type="disulfide bond" evidence="1">
    <location>
        <begin position="263"/>
        <end position="280"/>
    </location>
</feature>
<feature type="disulfide bond" evidence="1">
    <location>
        <begin position="508"/>
        <end position="529"/>
    </location>
</feature>
<name>FAE1_ARTBC</name>